<name>PYRC_CUPNH</name>
<sequence>MTQKLTITRPDDWHLHLRDGAALAAVLPDTARQFARAIIMPNLKPPVTTVAQAQAYRARILAALPAGLQFEPLMTLYLTDNTTAEEIAAAKASGFVHGVKLYPAGATTNSDAGVTDIRRCYPALEAMQRAGLPLLVHGEVTDPSIDIFDREAVFIDRVMTPLRRDMPELKVVFEHITTKDAAEYVRDASGPVGATITAHHLLYNRNAIFTGGIRPHYYCLPVLKRETHREALVAAAVSGSPRFFLGTDSAPHARGLKEHACGCAGCYTALHAMELYAEAFDAAGALDKLEAFASFNGPAFYGLPRNTGTLTLEREDWELPAELPYGDTTLVPLRGGETLRWKAR</sequence>
<feature type="chain" id="PRO_1000024041" description="Dihydroorotase">
    <location>
        <begin position="1"/>
        <end position="344"/>
    </location>
</feature>
<feature type="active site" evidence="1">
    <location>
        <position position="248"/>
    </location>
</feature>
<feature type="binding site" evidence="1">
    <location>
        <position position="14"/>
    </location>
    <ligand>
        <name>Zn(2+)</name>
        <dbReference type="ChEBI" id="CHEBI:29105"/>
        <label>1</label>
    </ligand>
</feature>
<feature type="binding site" evidence="1">
    <location>
        <begin position="16"/>
        <end position="18"/>
    </location>
    <ligand>
        <name>substrate</name>
    </ligand>
</feature>
<feature type="binding site" evidence="1">
    <location>
        <position position="16"/>
    </location>
    <ligand>
        <name>Zn(2+)</name>
        <dbReference type="ChEBI" id="CHEBI:29105"/>
        <label>1</label>
    </ligand>
</feature>
<feature type="binding site" evidence="1">
    <location>
        <position position="42"/>
    </location>
    <ligand>
        <name>substrate</name>
    </ligand>
</feature>
<feature type="binding site" description="via carbamate group" evidence="1">
    <location>
        <position position="100"/>
    </location>
    <ligand>
        <name>Zn(2+)</name>
        <dbReference type="ChEBI" id="CHEBI:29105"/>
        <label>1</label>
    </ligand>
</feature>
<feature type="binding site" description="via carbamate group" evidence="1">
    <location>
        <position position="100"/>
    </location>
    <ligand>
        <name>Zn(2+)</name>
        <dbReference type="ChEBI" id="CHEBI:29105"/>
        <label>2</label>
    </ligand>
</feature>
<feature type="binding site" evidence="1">
    <location>
        <position position="137"/>
    </location>
    <ligand>
        <name>substrate</name>
    </ligand>
</feature>
<feature type="binding site" evidence="1">
    <location>
        <position position="137"/>
    </location>
    <ligand>
        <name>Zn(2+)</name>
        <dbReference type="ChEBI" id="CHEBI:29105"/>
        <label>2</label>
    </ligand>
</feature>
<feature type="binding site" evidence="1">
    <location>
        <position position="175"/>
    </location>
    <ligand>
        <name>Zn(2+)</name>
        <dbReference type="ChEBI" id="CHEBI:29105"/>
        <label>2</label>
    </ligand>
</feature>
<feature type="binding site" evidence="1">
    <location>
        <position position="220"/>
    </location>
    <ligand>
        <name>substrate</name>
    </ligand>
</feature>
<feature type="binding site" evidence="1">
    <location>
        <position position="248"/>
    </location>
    <ligand>
        <name>Zn(2+)</name>
        <dbReference type="ChEBI" id="CHEBI:29105"/>
        <label>1</label>
    </ligand>
</feature>
<feature type="binding site" evidence="1">
    <location>
        <position position="252"/>
    </location>
    <ligand>
        <name>substrate</name>
    </ligand>
</feature>
<feature type="binding site" evidence="1">
    <location>
        <position position="264"/>
    </location>
    <ligand>
        <name>substrate</name>
    </ligand>
</feature>
<feature type="modified residue" description="N6-carboxylysine" evidence="1">
    <location>
        <position position="100"/>
    </location>
</feature>
<organism>
    <name type="scientific">Cupriavidus necator (strain ATCC 17699 / DSM 428 / KCTC 22496 / NCIMB 10442 / H16 / Stanier 337)</name>
    <name type="common">Ralstonia eutropha</name>
    <dbReference type="NCBI Taxonomy" id="381666"/>
    <lineage>
        <taxon>Bacteria</taxon>
        <taxon>Pseudomonadati</taxon>
        <taxon>Pseudomonadota</taxon>
        <taxon>Betaproteobacteria</taxon>
        <taxon>Burkholderiales</taxon>
        <taxon>Burkholderiaceae</taxon>
        <taxon>Cupriavidus</taxon>
    </lineage>
</organism>
<protein>
    <recommendedName>
        <fullName evidence="1">Dihydroorotase</fullName>
        <shortName evidence="1">DHOase</shortName>
        <ecNumber evidence="1">3.5.2.3</ecNumber>
    </recommendedName>
</protein>
<proteinExistence type="inferred from homology"/>
<dbReference type="EC" id="3.5.2.3" evidence="1"/>
<dbReference type="EMBL" id="AM260479">
    <property type="protein sequence ID" value="CAJ91629.1"/>
    <property type="molecule type" value="Genomic_DNA"/>
</dbReference>
<dbReference type="RefSeq" id="WP_011614536.1">
    <property type="nucleotide sequence ID" value="NC_008313.1"/>
</dbReference>
<dbReference type="SMR" id="Q0KEE2"/>
<dbReference type="STRING" id="381666.H16_A0479"/>
<dbReference type="MEROPS" id="M38.A02"/>
<dbReference type="GeneID" id="34309077"/>
<dbReference type="KEGG" id="reh:H16_A0479"/>
<dbReference type="eggNOG" id="COG0418">
    <property type="taxonomic scope" value="Bacteria"/>
</dbReference>
<dbReference type="HOGENOM" id="CLU_041558_1_0_4"/>
<dbReference type="OrthoDB" id="9808095at2"/>
<dbReference type="UniPathway" id="UPA00070">
    <property type="reaction ID" value="UER00117"/>
</dbReference>
<dbReference type="Proteomes" id="UP000008210">
    <property type="component" value="Chromosome 1"/>
</dbReference>
<dbReference type="GO" id="GO:0005829">
    <property type="term" value="C:cytosol"/>
    <property type="evidence" value="ECO:0007669"/>
    <property type="project" value="TreeGrafter"/>
</dbReference>
<dbReference type="GO" id="GO:0004151">
    <property type="term" value="F:dihydroorotase activity"/>
    <property type="evidence" value="ECO:0007669"/>
    <property type="project" value="UniProtKB-UniRule"/>
</dbReference>
<dbReference type="GO" id="GO:0008270">
    <property type="term" value="F:zinc ion binding"/>
    <property type="evidence" value="ECO:0007669"/>
    <property type="project" value="UniProtKB-UniRule"/>
</dbReference>
<dbReference type="GO" id="GO:0006207">
    <property type="term" value="P:'de novo' pyrimidine nucleobase biosynthetic process"/>
    <property type="evidence" value="ECO:0007669"/>
    <property type="project" value="TreeGrafter"/>
</dbReference>
<dbReference type="GO" id="GO:0044205">
    <property type="term" value="P:'de novo' UMP biosynthetic process"/>
    <property type="evidence" value="ECO:0007669"/>
    <property type="project" value="UniProtKB-UniRule"/>
</dbReference>
<dbReference type="CDD" id="cd01294">
    <property type="entry name" value="DHOase"/>
    <property type="match status" value="1"/>
</dbReference>
<dbReference type="FunFam" id="3.20.20.140:FF:000006">
    <property type="entry name" value="Dihydroorotase"/>
    <property type="match status" value="1"/>
</dbReference>
<dbReference type="Gene3D" id="3.20.20.140">
    <property type="entry name" value="Metal-dependent hydrolases"/>
    <property type="match status" value="1"/>
</dbReference>
<dbReference type="HAMAP" id="MF_00219">
    <property type="entry name" value="PyrC_classII"/>
    <property type="match status" value="1"/>
</dbReference>
<dbReference type="InterPro" id="IPR006680">
    <property type="entry name" value="Amidohydro-rel"/>
</dbReference>
<dbReference type="InterPro" id="IPR004721">
    <property type="entry name" value="DHOdimr"/>
</dbReference>
<dbReference type="InterPro" id="IPR002195">
    <property type="entry name" value="Dihydroorotase_CS"/>
</dbReference>
<dbReference type="InterPro" id="IPR032466">
    <property type="entry name" value="Metal_Hydrolase"/>
</dbReference>
<dbReference type="NCBIfam" id="TIGR00856">
    <property type="entry name" value="pyrC_dimer"/>
    <property type="match status" value="1"/>
</dbReference>
<dbReference type="PANTHER" id="PTHR43137">
    <property type="entry name" value="DIHYDROOROTASE"/>
    <property type="match status" value="1"/>
</dbReference>
<dbReference type="PANTHER" id="PTHR43137:SF1">
    <property type="entry name" value="DIHYDROOROTASE"/>
    <property type="match status" value="1"/>
</dbReference>
<dbReference type="Pfam" id="PF01979">
    <property type="entry name" value="Amidohydro_1"/>
    <property type="match status" value="1"/>
</dbReference>
<dbReference type="PIRSF" id="PIRSF001237">
    <property type="entry name" value="DHOdimr"/>
    <property type="match status" value="1"/>
</dbReference>
<dbReference type="SUPFAM" id="SSF51556">
    <property type="entry name" value="Metallo-dependent hydrolases"/>
    <property type="match status" value="1"/>
</dbReference>
<dbReference type="PROSITE" id="PS00482">
    <property type="entry name" value="DIHYDROOROTASE_1"/>
    <property type="match status" value="1"/>
</dbReference>
<dbReference type="PROSITE" id="PS00483">
    <property type="entry name" value="DIHYDROOROTASE_2"/>
    <property type="match status" value="1"/>
</dbReference>
<keyword id="KW-0378">Hydrolase</keyword>
<keyword id="KW-0479">Metal-binding</keyword>
<keyword id="KW-0665">Pyrimidine biosynthesis</keyword>
<keyword id="KW-1185">Reference proteome</keyword>
<keyword id="KW-0862">Zinc</keyword>
<comment type="function">
    <text evidence="1">Catalyzes the reversible cyclization of carbamoyl aspartate to dihydroorotate.</text>
</comment>
<comment type="catalytic activity">
    <reaction evidence="1">
        <text>(S)-dihydroorotate + H2O = N-carbamoyl-L-aspartate + H(+)</text>
        <dbReference type="Rhea" id="RHEA:24296"/>
        <dbReference type="ChEBI" id="CHEBI:15377"/>
        <dbReference type="ChEBI" id="CHEBI:15378"/>
        <dbReference type="ChEBI" id="CHEBI:30864"/>
        <dbReference type="ChEBI" id="CHEBI:32814"/>
        <dbReference type="EC" id="3.5.2.3"/>
    </reaction>
</comment>
<comment type="cofactor">
    <cofactor evidence="1">
        <name>Zn(2+)</name>
        <dbReference type="ChEBI" id="CHEBI:29105"/>
    </cofactor>
    <text evidence="1">Binds 2 Zn(2+) ions per subunit.</text>
</comment>
<comment type="pathway">
    <text evidence="1">Pyrimidine metabolism; UMP biosynthesis via de novo pathway; (S)-dihydroorotate from bicarbonate: step 3/3.</text>
</comment>
<comment type="subunit">
    <text evidence="1">Homodimer.</text>
</comment>
<comment type="similarity">
    <text evidence="1">Belongs to the metallo-dependent hydrolases superfamily. DHOase family. Class II DHOase subfamily.</text>
</comment>
<gene>
    <name evidence="1" type="primary">pyrC</name>
    <name type="ordered locus">H16_A0479</name>
</gene>
<reference key="1">
    <citation type="journal article" date="2006" name="Nat. Biotechnol.">
        <title>Genome sequence of the bioplastic-producing 'Knallgas' bacterium Ralstonia eutropha H16.</title>
        <authorList>
            <person name="Pohlmann A."/>
            <person name="Fricke W.F."/>
            <person name="Reinecke F."/>
            <person name="Kusian B."/>
            <person name="Liesegang H."/>
            <person name="Cramm R."/>
            <person name="Eitinger T."/>
            <person name="Ewering C."/>
            <person name="Poetter M."/>
            <person name="Schwartz E."/>
            <person name="Strittmatter A."/>
            <person name="Voss I."/>
            <person name="Gottschalk G."/>
            <person name="Steinbuechel A."/>
            <person name="Friedrich B."/>
            <person name="Bowien B."/>
        </authorList>
    </citation>
    <scope>NUCLEOTIDE SEQUENCE [LARGE SCALE GENOMIC DNA]</scope>
    <source>
        <strain>ATCC 17699 / DSM 428 / KCTC 22496 / NCIMB 10442 / H16 / Stanier 337</strain>
    </source>
</reference>
<accession>Q0KEE2</accession>
<evidence type="ECO:0000255" key="1">
    <source>
        <dbReference type="HAMAP-Rule" id="MF_00219"/>
    </source>
</evidence>